<sequence>MIEADRLIQPQIQAQDESIDRAMRPKMLDEYTGQDDTRAQLKVFIQAAKNRNEALDHMLIYGPPGLGKTTLAMIVANEMGVNIKSTSGPVLEKAGDLAALLTNLESGDVLFIDEIHRLSPVVEEILYPAMEDYQLDIMIGEGPAARSIKLDLPPFTLVGATTRAGALTSPLRARFGIPLRLEFYNIKDLSTIVTRSAQVMELDIDAEGAFEIARRSRGTPRIANRLLRRVRDYAQVKHDGAVTKFVAEHALDLLDVDSEGFDYMDRKLLLAIIDKFMGGPVGLDNLAAAIGEERETIEDVLEPFLIQQGFIQRTPRGRIATARAYQHFELIKPE</sequence>
<evidence type="ECO:0000255" key="1">
    <source>
        <dbReference type="HAMAP-Rule" id="MF_00016"/>
    </source>
</evidence>
<proteinExistence type="inferred from homology"/>
<protein>
    <recommendedName>
        <fullName evidence="1">Holliday junction branch migration complex subunit RuvB</fullName>
        <ecNumber evidence="1">3.6.4.-</ecNumber>
    </recommendedName>
</protein>
<gene>
    <name evidence="1" type="primary">ruvB</name>
    <name type="ordered locus">Sbal223_2044</name>
</gene>
<dbReference type="EC" id="3.6.4.-" evidence="1"/>
<dbReference type="EMBL" id="CP001252">
    <property type="protein sequence ID" value="ACK46548.1"/>
    <property type="molecule type" value="Genomic_DNA"/>
</dbReference>
<dbReference type="RefSeq" id="WP_006081741.1">
    <property type="nucleotide sequence ID" value="NC_011663.1"/>
</dbReference>
<dbReference type="SMR" id="B8EA75"/>
<dbReference type="KEGG" id="sbp:Sbal223_2044"/>
<dbReference type="HOGENOM" id="CLU_055599_1_0_6"/>
<dbReference type="Proteomes" id="UP000002507">
    <property type="component" value="Chromosome"/>
</dbReference>
<dbReference type="GO" id="GO:0005737">
    <property type="term" value="C:cytoplasm"/>
    <property type="evidence" value="ECO:0007669"/>
    <property type="project" value="UniProtKB-SubCell"/>
</dbReference>
<dbReference type="GO" id="GO:0048476">
    <property type="term" value="C:Holliday junction resolvase complex"/>
    <property type="evidence" value="ECO:0007669"/>
    <property type="project" value="UniProtKB-UniRule"/>
</dbReference>
<dbReference type="GO" id="GO:0005524">
    <property type="term" value="F:ATP binding"/>
    <property type="evidence" value="ECO:0007669"/>
    <property type="project" value="UniProtKB-UniRule"/>
</dbReference>
<dbReference type="GO" id="GO:0016887">
    <property type="term" value="F:ATP hydrolysis activity"/>
    <property type="evidence" value="ECO:0007669"/>
    <property type="project" value="InterPro"/>
</dbReference>
<dbReference type="GO" id="GO:0000400">
    <property type="term" value="F:four-way junction DNA binding"/>
    <property type="evidence" value="ECO:0007669"/>
    <property type="project" value="UniProtKB-UniRule"/>
</dbReference>
<dbReference type="GO" id="GO:0009378">
    <property type="term" value="F:four-way junction helicase activity"/>
    <property type="evidence" value="ECO:0007669"/>
    <property type="project" value="InterPro"/>
</dbReference>
<dbReference type="GO" id="GO:0006310">
    <property type="term" value="P:DNA recombination"/>
    <property type="evidence" value="ECO:0007669"/>
    <property type="project" value="UniProtKB-UniRule"/>
</dbReference>
<dbReference type="GO" id="GO:0006281">
    <property type="term" value="P:DNA repair"/>
    <property type="evidence" value="ECO:0007669"/>
    <property type="project" value="UniProtKB-UniRule"/>
</dbReference>
<dbReference type="CDD" id="cd00009">
    <property type="entry name" value="AAA"/>
    <property type="match status" value="1"/>
</dbReference>
<dbReference type="FunFam" id="1.10.10.10:FF:000086">
    <property type="entry name" value="Holliday junction ATP-dependent DNA helicase RuvB"/>
    <property type="match status" value="1"/>
</dbReference>
<dbReference type="FunFam" id="1.10.8.60:FF:000023">
    <property type="entry name" value="Holliday junction ATP-dependent DNA helicase RuvB"/>
    <property type="match status" value="1"/>
</dbReference>
<dbReference type="FunFam" id="3.40.50.300:FF:000073">
    <property type="entry name" value="Holliday junction ATP-dependent DNA helicase RuvB"/>
    <property type="match status" value="1"/>
</dbReference>
<dbReference type="Gene3D" id="1.10.8.60">
    <property type="match status" value="1"/>
</dbReference>
<dbReference type="Gene3D" id="3.40.50.300">
    <property type="entry name" value="P-loop containing nucleotide triphosphate hydrolases"/>
    <property type="match status" value="1"/>
</dbReference>
<dbReference type="Gene3D" id="1.10.10.10">
    <property type="entry name" value="Winged helix-like DNA-binding domain superfamily/Winged helix DNA-binding domain"/>
    <property type="match status" value="1"/>
</dbReference>
<dbReference type="HAMAP" id="MF_00016">
    <property type="entry name" value="DNA_HJ_migration_RuvB"/>
    <property type="match status" value="1"/>
</dbReference>
<dbReference type="InterPro" id="IPR003593">
    <property type="entry name" value="AAA+_ATPase"/>
</dbReference>
<dbReference type="InterPro" id="IPR041445">
    <property type="entry name" value="AAA_lid_4"/>
</dbReference>
<dbReference type="InterPro" id="IPR004605">
    <property type="entry name" value="DNA_helicase_Holl-junc_RuvB"/>
</dbReference>
<dbReference type="InterPro" id="IPR027417">
    <property type="entry name" value="P-loop_NTPase"/>
</dbReference>
<dbReference type="InterPro" id="IPR008824">
    <property type="entry name" value="RuvB-like_N"/>
</dbReference>
<dbReference type="InterPro" id="IPR008823">
    <property type="entry name" value="RuvB_C"/>
</dbReference>
<dbReference type="InterPro" id="IPR036388">
    <property type="entry name" value="WH-like_DNA-bd_sf"/>
</dbReference>
<dbReference type="InterPro" id="IPR036390">
    <property type="entry name" value="WH_DNA-bd_sf"/>
</dbReference>
<dbReference type="NCBIfam" id="NF000868">
    <property type="entry name" value="PRK00080.1"/>
    <property type="match status" value="1"/>
</dbReference>
<dbReference type="NCBIfam" id="TIGR00635">
    <property type="entry name" value="ruvB"/>
    <property type="match status" value="1"/>
</dbReference>
<dbReference type="PANTHER" id="PTHR42848">
    <property type="match status" value="1"/>
</dbReference>
<dbReference type="PANTHER" id="PTHR42848:SF1">
    <property type="entry name" value="HOLLIDAY JUNCTION BRANCH MIGRATION COMPLEX SUBUNIT RUVB"/>
    <property type="match status" value="1"/>
</dbReference>
<dbReference type="Pfam" id="PF17864">
    <property type="entry name" value="AAA_lid_4"/>
    <property type="match status" value="1"/>
</dbReference>
<dbReference type="Pfam" id="PF05491">
    <property type="entry name" value="RuvB_C"/>
    <property type="match status" value="1"/>
</dbReference>
<dbReference type="Pfam" id="PF05496">
    <property type="entry name" value="RuvB_N"/>
    <property type="match status" value="1"/>
</dbReference>
<dbReference type="SMART" id="SM00382">
    <property type="entry name" value="AAA"/>
    <property type="match status" value="1"/>
</dbReference>
<dbReference type="SUPFAM" id="SSF52540">
    <property type="entry name" value="P-loop containing nucleoside triphosphate hydrolases"/>
    <property type="match status" value="1"/>
</dbReference>
<dbReference type="SUPFAM" id="SSF46785">
    <property type="entry name" value="Winged helix' DNA-binding domain"/>
    <property type="match status" value="1"/>
</dbReference>
<keyword id="KW-0067">ATP-binding</keyword>
<keyword id="KW-0963">Cytoplasm</keyword>
<keyword id="KW-0227">DNA damage</keyword>
<keyword id="KW-0233">DNA recombination</keyword>
<keyword id="KW-0234">DNA repair</keyword>
<keyword id="KW-0238">DNA-binding</keyword>
<keyword id="KW-0378">Hydrolase</keyword>
<keyword id="KW-0547">Nucleotide-binding</keyword>
<name>RUVB_SHEB2</name>
<reference key="1">
    <citation type="submission" date="2008-12" db="EMBL/GenBank/DDBJ databases">
        <title>Complete sequence of chromosome of Shewanella baltica OS223.</title>
        <authorList>
            <consortium name="US DOE Joint Genome Institute"/>
            <person name="Lucas S."/>
            <person name="Copeland A."/>
            <person name="Lapidus A."/>
            <person name="Glavina del Rio T."/>
            <person name="Dalin E."/>
            <person name="Tice H."/>
            <person name="Bruce D."/>
            <person name="Goodwin L."/>
            <person name="Pitluck S."/>
            <person name="Chertkov O."/>
            <person name="Meincke L."/>
            <person name="Brettin T."/>
            <person name="Detter J.C."/>
            <person name="Han C."/>
            <person name="Kuske C.R."/>
            <person name="Larimer F."/>
            <person name="Land M."/>
            <person name="Hauser L."/>
            <person name="Kyrpides N."/>
            <person name="Ovchinnikova G."/>
            <person name="Brettar I."/>
            <person name="Rodrigues J."/>
            <person name="Konstantinidis K."/>
            <person name="Tiedje J."/>
        </authorList>
    </citation>
    <scope>NUCLEOTIDE SEQUENCE [LARGE SCALE GENOMIC DNA]</scope>
    <source>
        <strain>OS223</strain>
    </source>
</reference>
<feature type="chain" id="PRO_1000116655" description="Holliday junction branch migration complex subunit RuvB">
    <location>
        <begin position="1"/>
        <end position="334"/>
    </location>
</feature>
<feature type="region of interest" description="Large ATPase domain (RuvB-L)" evidence="1">
    <location>
        <begin position="4"/>
        <end position="184"/>
    </location>
</feature>
<feature type="region of interest" description="Small ATPAse domain (RuvB-S)" evidence="1">
    <location>
        <begin position="185"/>
        <end position="255"/>
    </location>
</feature>
<feature type="region of interest" description="Head domain (RuvB-H)" evidence="1">
    <location>
        <begin position="258"/>
        <end position="334"/>
    </location>
</feature>
<feature type="binding site" evidence="1">
    <location>
        <position position="24"/>
    </location>
    <ligand>
        <name>ATP</name>
        <dbReference type="ChEBI" id="CHEBI:30616"/>
    </ligand>
</feature>
<feature type="binding site" evidence="1">
    <location>
        <position position="65"/>
    </location>
    <ligand>
        <name>ATP</name>
        <dbReference type="ChEBI" id="CHEBI:30616"/>
    </ligand>
</feature>
<feature type="binding site" evidence="1">
    <location>
        <position position="68"/>
    </location>
    <ligand>
        <name>ATP</name>
        <dbReference type="ChEBI" id="CHEBI:30616"/>
    </ligand>
</feature>
<feature type="binding site" evidence="1">
    <location>
        <position position="69"/>
    </location>
    <ligand>
        <name>ATP</name>
        <dbReference type="ChEBI" id="CHEBI:30616"/>
    </ligand>
</feature>
<feature type="binding site" evidence="1">
    <location>
        <position position="69"/>
    </location>
    <ligand>
        <name>Mg(2+)</name>
        <dbReference type="ChEBI" id="CHEBI:18420"/>
    </ligand>
</feature>
<feature type="binding site" evidence="1">
    <location>
        <position position="70"/>
    </location>
    <ligand>
        <name>ATP</name>
        <dbReference type="ChEBI" id="CHEBI:30616"/>
    </ligand>
</feature>
<feature type="binding site" evidence="1">
    <location>
        <begin position="131"/>
        <end position="133"/>
    </location>
    <ligand>
        <name>ATP</name>
        <dbReference type="ChEBI" id="CHEBI:30616"/>
    </ligand>
</feature>
<feature type="binding site" evidence="1">
    <location>
        <position position="174"/>
    </location>
    <ligand>
        <name>ATP</name>
        <dbReference type="ChEBI" id="CHEBI:30616"/>
    </ligand>
</feature>
<feature type="binding site" evidence="1">
    <location>
        <position position="184"/>
    </location>
    <ligand>
        <name>ATP</name>
        <dbReference type="ChEBI" id="CHEBI:30616"/>
    </ligand>
</feature>
<feature type="binding site" evidence="1">
    <location>
        <position position="221"/>
    </location>
    <ligand>
        <name>ATP</name>
        <dbReference type="ChEBI" id="CHEBI:30616"/>
    </ligand>
</feature>
<feature type="binding site" evidence="1">
    <location>
        <position position="294"/>
    </location>
    <ligand>
        <name>DNA</name>
        <dbReference type="ChEBI" id="CHEBI:16991"/>
    </ligand>
</feature>
<feature type="binding site" evidence="1">
    <location>
        <position position="313"/>
    </location>
    <ligand>
        <name>DNA</name>
        <dbReference type="ChEBI" id="CHEBI:16991"/>
    </ligand>
</feature>
<feature type="binding site" evidence="1">
    <location>
        <position position="318"/>
    </location>
    <ligand>
        <name>DNA</name>
        <dbReference type="ChEBI" id="CHEBI:16991"/>
    </ligand>
</feature>
<accession>B8EA75</accession>
<comment type="function">
    <text evidence="1">The RuvA-RuvB-RuvC complex processes Holliday junction (HJ) DNA during genetic recombination and DNA repair, while the RuvA-RuvB complex plays an important role in the rescue of blocked DNA replication forks via replication fork reversal (RFR). RuvA specifically binds to HJ cruciform DNA, conferring on it an open structure. The RuvB hexamer acts as an ATP-dependent pump, pulling dsDNA into and through the RuvAB complex. RuvB forms 2 homohexamers on either side of HJ DNA bound by 1 or 2 RuvA tetramers; 4 subunits per hexamer contact DNA at a time. Coordinated motions by a converter formed by DNA-disengaged RuvB subunits stimulates ATP hydrolysis and nucleotide exchange. Immobilization of the converter enables RuvB to convert the ATP-contained energy into a lever motion, pulling 2 nucleotides of DNA out of the RuvA tetramer per ATP hydrolyzed, thus driving DNA branch migration. The RuvB motors rotate together with the DNA substrate, which together with the progressing nucleotide cycle form the mechanistic basis for DNA recombination by continuous HJ branch migration. Branch migration allows RuvC to scan DNA until it finds its consensus sequence, where it cleaves and resolves cruciform DNA.</text>
</comment>
<comment type="catalytic activity">
    <reaction evidence="1">
        <text>ATP + H2O = ADP + phosphate + H(+)</text>
        <dbReference type="Rhea" id="RHEA:13065"/>
        <dbReference type="ChEBI" id="CHEBI:15377"/>
        <dbReference type="ChEBI" id="CHEBI:15378"/>
        <dbReference type="ChEBI" id="CHEBI:30616"/>
        <dbReference type="ChEBI" id="CHEBI:43474"/>
        <dbReference type="ChEBI" id="CHEBI:456216"/>
    </reaction>
</comment>
<comment type="subunit">
    <text evidence="1">Homohexamer. Forms an RuvA(8)-RuvB(12)-Holliday junction (HJ) complex. HJ DNA is sandwiched between 2 RuvA tetramers; dsDNA enters through RuvA and exits via RuvB. An RuvB hexamer assembles on each DNA strand where it exits the tetramer. Each RuvB hexamer is contacted by two RuvA subunits (via domain III) on 2 adjacent RuvB subunits; this complex drives branch migration. In the full resolvosome a probable DNA-RuvA(4)-RuvB(12)-RuvC(2) complex forms which resolves the HJ.</text>
</comment>
<comment type="subcellular location">
    <subcellularLocation>
        <location evidence="1">Cytoplasm</location>
    </subcellularLocation>
</comment>
<comment type="domain">
    <text evidence="1">Has 3 domains, the large (RuvB-L) and small ATPase (RuvB-S) domains and the C-terminal head (RuvB-H) domain. The head domain binds DNA, while the ATPase domains jointly bind ATP, ADP or are empty depending on the state of the subunit in the translocation cycle. During a single DNA translocation step the structure of each domain remains the same, but their relative positions change.</text>
</comment>
<comment type="similarity">
    <text evidence="1">Belongs to the RuvB family.</text>
</comment>
<organism>
    <name type="scientific">Shewanella baltica (strain OS223)</name>
    <dbReference type="NCBI Taxonomy" id="407976"/>
    <lineage>
        <taxon>Bacteria</taxon>
        <taxon>Pseudomonadati</taxon>
        <taxon>Pseudomonadota</taxon>
        <taxon>Gammaproteobacteria</taxon>
        <taxon>Alteromonadales</taxon>
        <taxon>Shewanellaceae</taxon>
        <taxon>Shewanella</taxon>
    </lineage>
</organism>